<proteinExistence type="evidence at protein level"/>
<feature type="chain" id="PRO_0000170991" description="Molybdopterin molybdenumtransferase 1">
    <location>
        <begin position="1"/>
        <end position="426"/>
    </location>
</feature>
<dbReference type="EC" id="2.10.1.1"/>
<dbReference type="EMBL" id="AL123456">
    <property type="protein sequence ID" value="CCP43744.1"/>
    <property type="molecule type" value="Genomic_DNA"/>
</dbReference>
<dbReference type="PIR" id="E70601">
    <property type="entry name" value="E70601"/>
</dbReference>
<dbReference type="RefSeq" id="YP_177776.1">
    <property type="nucleotide sequence ID" value="NC_000962.3"/>
</dbReference>
<dbReference type="SMR" id="P9WJQ7"/>
<dbReference type="FunCoup" id="P9WJQ7">
    <property type="interactions" value="382"/>
</dbReference>
<dbReference type="STRING" id="83332.Rv0994"/>
<dbReference type="PaxDb" id="83332-Rv0994"/>
<dbReference type="DNASU" id="885404"/>
<dbReference type="GeneID" id="885404"/>
<dbReference type="KEGG" id="mtu:Rv0994"/>
<dbReference type="KEGG" id="mtv:RVBD_0994"/>
<dbReference type="TubercuList" id="Rv0994"/>
<dbReference type="eggNOG" id="COG0303">
    <property type="taxonomic scope" value="Bacteria"/>
</dbReference>
<dbReference type="InParanoid" id="P9WJQ7"/>
<dbReference type="OrthoDB" id="9804758at2"/>
<dbReference type="PhylomeDB" id="P9WJQ7"/>
<dbReference type="UniPathway" id="UPA00344"/>
<dbReference type="Proteomes" id="UP000001584">
    <property type="component" value="Chromosome"/>
</dbReference>
<dbReference type="GO" id="GO:0005737">
    <property type="term" value="C:cytoplasm"/>
    <property type="evidence" value="ECO:0000318"/>
    <property type="project" value="GO_Central"/>
</dbReference>
<dbReference type="GO" id="GO:0005829">
    <property type="term" value="C:cytosol"/>
    <property type="evidence" value="ECO:0007005"/>
    <property type="project" value="MTBBASE"/>
</dbReference>
<dbReference type="GO" id="GO:0005886">
    <property type="term" value="C:plasma membrane"/>
    <property type="evidence" value="ECO:0007005"/>
    <property type="project" value="MTBBASE"/>
</dbReference>
<dbReference type="GO" id="GO:0046872">
    <property type="term" value="F:metal ion binding"/>
    <property type="evidence" value="ECO:0007669"/>
    <property type="project" value="UniProtKB-KW"/>
</dbReference>
<dbReference type="GO" id="GO:0061599">
    <property type="term" value="F:molybdopterin molybdotransferase activity"/>
    <property type="evidence" value="ECO:0000318"/>
    <property type="project" value="GO_Central"/>
</dbReference>
<dbReference type="GO" id="GO:0006777">
    <property type="term" value="P:Mo-molybdopterin cofactor biosynthetic process"/>
    <property type="evidence" value="ECO:0000318"/>
    <property type="project" value="GO_Central"/>
</dbReference>
<dbReference type="CDD" id="cd00887">
    <property type="entry name" value="MoeA"/>
    <property type="match status" value="1"/>
</dbReference>
<dbReference type="FunFam" id="2.170.190.11:FF:000011">
    <property type="entry name" value="Molybdopterin molybdenumtransferase"/>
    <property type="match status" value="1"/>
</dbReference>
<dbReference type="FunFam" id="3.40.980.10:FF:000012">
    <property type="entry name" value="Molybdopterin molybdenumtransferase"/>
    <property type="match status" value="1"/>
</dbReference>
<dbReference type="Gene3D" id="3.40.980.10">
    <property type="entry name" value="MoaB/Mog-like domain"/>
    <property type="match status" value="1"/>
</dbReference>
<dbReference type="Gene3D" id="2.40.340.10">
    <property type="entry name" value="MoeA, C-terminal, domain IV"/>
    <property type="match status" value="1"/>
</dbReference>
<dbReference type="Gene3D" id="3.90.105.10">
    <property type="entry name" value="Molybdopterin biosynthesis moea protein, domain 2"/>
    <property type="match status" value="1"/>
</dbReference>
<dbReference type="Gene3D" id="2.170.190.11">
    <property type="entry name" value="Molybdopterin biosynthesis moea protein, domain 3"/>
    <property type="match status" value="1"/>
</dbReference>
<dbReference type="InterPro" id="IPR036425">
    <property type="entry name" value="MoaB/Mog-like_dom_sf"/>
</dbReference>
<dbReference type="InterPro" id="IPR001453">
    <property type="entry name" value="MoaB/Mog_dom"/>
</dbReference>
<dbReference type="InterPro" id="IPR038987">
    <property type="entry name" value="MoeA-like"/>
</dbReference>
<dbReference type="InterPro" id="IPR005111">
    <property type="entry name" value="MoeA_C_domain_IV"/>
</dbReference>
<dbReference type="InterPro" id="IPR036688">
    <property type="entry name" value="MoeA_C_domain_IV_sf"/>
</dbReference>
<dbReference type="InterPro" id="IPR005110">
    <property type="entry name" value="MoeA_linker/N"/>
</dbReference>
<dbReference type="InterPro" id="IPR036135">
    <property type="entry name" value="MoeA_linker/N_sf"/>
</dbReference>
<dbReference type="NCBIfam" id="NF045515">
    <property type="entry name" value="Glp_gephyrin"/>
    <property type="match status" value="1"/>
</dbReference>
<dbReference type="NCBIfam" id="TIGR00177">
    <property type="entry name" value="molyb_syn"/>
    <property type="match status" value="1"/>
</dbReference>
<dbReference type="PANTHER" id="PTHR10192:SF5">
    <property type="entry name" value="GEPHYRIN"/>
    <property type="match status" value="1"/>
</dbReference>
<dbReference type="PANTHER" id="PTHR10192">
    <property type="entry name" value="MOLYBDOPTERIN BIOSYNTHESIS PROTEIN"/>
    <property type="match status" value="1"/>
</dbReference>
<dbReference type="Pfam" id="PF00994">
    <property type="entry name" value="MoCF_biosynth"/>
    <property type="match status" value="1"/>
</dbReference>
<dbReference type="Pfam" id="PF03454">
    <property type="entry name" value="MoeA_C"/>
    <property type="match status" value="1"/>
</dbReference>
<dbReference type="Pfam" id="PF03453">
    <property type="entry name" value="MoeA_N"/>
    <property type="match status" value="1"/>
</dbReference>
<dbReference type="SMART" id="SM00852">
    <property type="entry name" value="MoCF_biosynth"/>
    <property type="match status" value="1"/>
</dbReference>
<dbReference type="SUPFAM" id="SSF63867">
    <property type="entry name" value="MoeA C-terminal domain-like"/>
    <property type="match status" value="1"/>
</dbReference>
<dbReference type="SUPFAM" id="SSF63882">
    <property type="entry name" value="MoeA N-terminal region -like"/>
    <property type="match status" value="1"/>
</dbReference>
<dbReference type="SUPFAM" id="SSF53218">
    <property type="entry name" value="Molybdenum cofactor biosynthesis proteins"/>
    <property type="match status" value="1"/>
</dbReference>
<gene>
    <name type="primary">moeA1</name>
    <name type="synonym">moeA</name>
    <name type="ordered locus">Rv0994</name>
    <name type="ORF">MTCI237.08</name>
</gene>
<reference key="1">
    <citation type="journal article" date="1998" name="Nature">
        <title>Deciphering the biology of Mycobacterium tuberculosis from the complete genome sequence.</title>
        <authorList>
            <person name="Cole S.T."/>
            <person name="Brosch R."/>
            <person name="Parkhill J."/>
            <person name="Garnier T."/>
            <person name="Churcher C.M."/>
            <person name="Harris D.E."/>
            <person name="Gordon S.V."/>
            <person name="Eiglmeier K."/>
            <person name="Gas S."/>
            <person name="Barry C.E. III"/>
            <person name="Tekaia F."/>
            <person name="Badcock K."/>
            <person name="Basham D."/>
            <person name="Brown D."/>
            <person name="Chillingworth T."/>
            <person name="Connor R."/>
            <person name="Davies R.M."/>
            <person name="Devlin K."/>
            <person name="Feltwell T."/>
            <person name="Gentles S."/>
            <person name="Hamlin N."/>
            <person name="Holroyd S."/>
            <person name="Hornsby T."/>
            <person name="Jagels K."/>
            <person name="Krogh A."/>
            <person name="McLean J."/>
            <person name="Moule S."/>
            <person name="Murphy L.D."/>
            <person name="Oliver S."/>
            <person name="Osborne J."/>
            <person name="Quail M.A."/>
            <person name="Rajandream M.A."/>
            <person name="Rogers J."/>
            <person name="Rutter S."/>
            <person name="Seeger K."/>
            <person name="Skelton S."/>
            <person name="Squares S."/>
            <person name="Squares R."/>
            <person name="Sulston J.E."/>
            <person name="Taylor K."/>
            <person name="Whitehead S."/>
            <person name="Barrell B.G."/>
        </authorList>
    </citation>
    <scope>NUCLEOTIDE SEQUENCE [LARGE SCALE GENOMIC DNA]</scope>
    <source>
        <strain>ATCC 25618 / H37Rv</strain>
    </source>
</reference>
<reference key="2">
    <citation type="journal article" date="2011" name="Mol. Cell. Proteomics">
        <title>Proteogenomic analysis of Mycobacterium tuberculosis by high resolution mass spectrometry.</title>
        <authorList>
            <person name="Kelkar D.S."/>
            <person name="Kumar D."/>
            <person name="Kumar P."/>
            <person name="Balakrishnan L."/>
            <person name="Muthusamy B."/>
            <person name="Yadav A.K."/>
            <person name="Shrivastava P."/>
            <person name="Marimuthu A."/>
            <person name="Anand S."/>
            <person name="Sundaram H."/>
            <person name="Kingsbury R."/>
            <person name="Harsha H.C."/>
            <person name="Nair B."/>
            <person name="Prasad T.S."/>
            <person name="Chauhan D.S."/>
            <person name="Katoch K."/>
            <person name="Katoch V.M."/>
            <person name="Kumar P."/>
            <person name="Chaerkady R."/>
            <person name="Ramachandran S."/>
            <person name="Dash D."/>
            <person name="Pandey A."/>
        </authorList>
    </citation>
    <scope>IDENTIFICATION BY MASS SPECTROMETRY [LARGE SCALE ANALYSIS]</scope>
    <source>
        <strain>ATCC 25618 / H37Rv</strain>
    </source>
</reference>
<evidence type="ECO:0000250" key="1"/>
<evidence type="ECO:0000305" key="2"/>
<name>MOEA1_MYCTU</name>
<keyword id="KW-0460">Magnesium</keyword>
<keyword id="KW-0479">Metal-binding</keyword>
<keyword id="KW-0500">Molybdenum</keyword>
<keyword id="KW-0501">Molybdenum cofactor biosynthesis</keyword>
<keyword id="KW-1185">Reference proteome</keyword>
<keyword id="KW-0808">Transferase</keyword>
<organism>
    <name type="scientific">Mycobacterium tuberculosis (strain ATCC 25618 / H37Rv)</name>
    <dbReference type="NCBI Taxonomy" id="83332"/>
    <lineage>
        <taxon>Bacteria</taxon>
        <taxon>Bacillati</taxon>
        <taxon>Actinomycetota</taxon>
        <taxon>Actinomycetes</taxon>
        <taxon>Mycobacteriales</taxon>
        <taxon>Mycobacteriaceae</taxon>
        <taxon>Mycobacterium</taxon>
        <taxon>Mycobacterium tuberculosis complex</taxon>
    </lineage>
</organism>
<sequence length="426" mass="44337">MRSVEEQQARISAAAVAPRPIRVAIAEAQGLMCAEEVVTERPMPGFDQAAIDGYAVRSVDVAGVGDTGGVQVFADHGDLDGRDVLTLPVMGTIEAGARTLSRLQPRQAVRVQTGAPLPTLADAVLPLRWTDGGMSRVRVLRGAPSGAYVRRAGDDVQPGDVAVRAGTIIGAAQVGLLAAVGRERVLVHPRPRLSVMAVGGELVDISRTPGNGQVYDVNSYALAAAGRDACAEVNRVGIVSNDPTELGEIVEGQLNRAEVVVIAGGVGGAAAEAVRSVLSELGEMEVVRVAMHPGSVQGFGQLGRDGVPTFLLPANPVSALVVFEVMVRPLIRLSLGKRHPMRRIVSARTLSPITSVAGRKGYLRGQLMRDQDSGEYLVQALGGAPGASSHLLATLAEANCLVVVPTGAEQIRTGEIVDVAFLAQHG</sequence>
<protein>
    <recommendedName>
        <fullName>Molybdopterin molybdenumtransferase 1</fullName>
        <shortName>MPT Mo-transferase 1</shortName>
        <ecNumber>2.10.1.1</ecNumber>
    </recommendedName>
</protein>
<accession>P9WJQ7</accession>
<accession>L0T705</accession>
<accession>O05577</accession>
<comment type="function">
    <text evidence="1">Catalyzes the insertion of molybdate into adenylated molybdopterin with the concomitant release of AMP.</text>
</comment>
<comment type="catalytic activity">
    <reaction>
        <text>adenylyl-molybdopterin + molybdate = Mo-molybdopterin + AMP + H(+)</text>
        <dbReference type="Rhea" id="RHEA:35047"/>
        <dbReference type="ChEBI" id="CHEBI:15378"/>
        <dbReference type="ChEBI" id="CHEBI:36264"/>
        <dbReference type="ChEBI" id="CHEBI:62727"/>
        <dbReference type="ChEBI" id="CHEBI:71302"/>
        <dbReference type="ChEBI" id="CHEBI:456215"/>
        <dbReference type="EC" id="2.10.1.1"/>
    </reaction>
</comment>
<comment type="cofactor">
    <cofactor evidence="1">
        <name>Mg(2+)</name>
        <dbReference type="ChEBI" id="CHEBI:18420"/>
    </cofactor>
    <text evidence="1">Binds 1 Mg(2+) ion per subunit.</text>
</comment>
<comment type="pathway">
    <text>Cofactor biosynthesis; molybdopterin biosynthesis.</text>
</comment>
<comment type="similarity">
    <text evidence="2">Belongs to the MoeA family.</text>
</comment>